<organism>
    <name type="scientific">Salmonella paratyphi A (strain ATCC 9150 / SARB42)</name>
    <dbReference type="NCBI Taxonomy" id="295319"/>
    <lineage>
        <taxon>Bacteria</taxon>
        <taxon>Pseudomonadati</taxon>
        <taxon>Pseudomonadota</taxon>
        <taxon>Gammaproteobacteria</taxon>
        <taxon>Enterobacterales</taxon>
        <taxon>Enterobacteriaceae</taxon>
        <taxon>Salmonella</taxon>
    </lineage>
</organism>
<accession>Q5PD65</accession>
<gene>
    <name evidence="1" type="primary">bamA</name>
    <name type="synonym">yaeT</name>
    <name type="ordered locus">SPA0231</name>
</gene>
<evidence type="ECO:0000255" key="1">
    <source>
        <dbReference type="HAMAP-Rule" id="MF_01430"/>
    </source>
</evidence>
<evidence type="ECO:0000255" key="2">
    <source>
        <dbReference type="PROSITE-ProRule" id="PRU01115"/>
    </source>
</evidence>
<proteinExistence type="inferred from homology"/>
<keyword id="KW-0998">Cell outer membrane</keyword>
<keyword id="KW-0472">Membrane</keyword>
<keyword id="KW-0677">Repeat</keyword>
<keyword id="KW-0732">Signal</keyword>
<keyword id="KW-0812">Transmembrane</keyword>
<keyword id="KW-1134">Transmembrane beta strand</keyword>
<dbReference type="EMBL" id="CP000026">
    <property type="protein sequence ID" value="AAV76260.1"/>
    <property type="molecule type" value="Genomic_DNA"/>
</dbReference>
<dbReference type="RefSeq" id="WP_001240922.1">
    <property type="nucleotide sequence ID" value="NC_006511.1"/>
</dbReference>
<dbReference type="SMR" id="Q5PD65"/>
<dbReference type="KEGG" id="spt:SPA0231"/>
<dbReference type="HOGENOM" id="CLU_007664_1_0_6"/>
<dbReference type="Proteomes" id="UP000008185">
    <property type="component" value="Chromosome"/>
</dbReference>
<dbReference type="GO" id="GO:1990063">
    <property type="term" value="C:Bam protein complex"/>
    <property type="evidence" value="ECO:0007669"/>
    <property type="project" value="TreeGrafter"/>
</dbReference>
<dbReference type="GO" id="GO:0043165">
    <property type="term" value="P:Gram-negative-bacterium-type cell outer membrane assembly"/>
    <property type="evidence" value="ECO:0007669"/>
    <property type="project" value="UniProtKB-UniRule"/>
</dbReference>
<dbReference type="GO" id="GO:0051205">
    <property type="term" value="P:protein insertion into membrane"/>
    <property type="evidence" value="ECO:0007669"/>
    <property type="project" value="UniProtKB-UniRule"/>
</dbReference>
<dbReference type="FunFam" id="2.40.160.50:FF:000001">
    <property type="entry name" value="Outer membrane protein assembly factor BamA"/>
    <property type="match status" value="1"/>
</dbReference>
<dbReference type="FunFam" id="3.10.20.310:FF:000001">
    <property type="entry name" value="Outer membrane protein assembly factor BamA"/>
    <property type="match status" value="1"/>
</dbReference>
<dbReference type="FunFam" id="3.10.20.310:FF:000002">
    <property type="entry name" value="Outer membrane protein assembly factor BamA"/>
    <property type="match status" value="1"/>
</dbReference>
<dbReference type="FunFam" id="3.10.20.310:FF:000003">
    <property type="entry name" value="Outer membrane protein assembly factor BamA"/>
    <property type="match status" value="1"/>
</dbReference>
<dbReference type="FunFam" id="3.10.20.310:FF:000004">
    <property type="entry name" value="Outer membrane protein assembly factor BamA"/>
    <property type="match status" value="1"/>
</dbReference>
<dbReference type="FunFam" id="3.10.20.310:FF:000005">
    <property type="entry name" value="Outer membrane protein assembly factor BamA"/>
    <property type="match status" value="1"/>
</dbReference>
<dbReference type="Gene3D" id="3.10.20.310">
    <property type="entry name" value="membrane protein fhac"/>
    <property type="match status" value="5"/>
</dbReference>
<dbReference type="Gene3D" id="2.40.160.50">
    <property type="entry name" value="membrane protein fhac: a member of the omp85/tpsb transporter family"/>
    <property type="match status" value="1"/>
</dbReference>
<dbReference type="HAMAP" id="MF_01430">
    <property type="entry name" value="OM_assembly_BamA"/>
    <property type="match status" value="1"/>
</dbReference>
<dbReference type="InterPro" id="IPR000184">
    <property type="entry name" value="Bac_surfAg_D15"/>
</dbReference>
<dbReference type="InterPro" id="IPR010827">
    <property type="entry name" value="BamA/TamA_POTRA"/>
</dbReference>
<dbReference type="InterPro" id="IPR039910">
    <property type="entry name" value="D15-like"/>
</dbReference>
<dbReference type="InterPro" id="IPR023707">
    <property type="entry name" value="OM_assembly_BamA"/>
</dbReference>
<dbReference type="InterPro" id="IPR034746">
    <property type="entry name" value="POTRA"/>
</dbReference>
<dbReference type="NCBIfam" id="TIGR03303">
    <property type="entry name" value="OM_YaeT"/>
    <property type="match status" value="1"/>
</dbReference>
<dbReference type="NCBIfam" id="NF008287">
    <property type="entry name" value="PRK11067.1"/>
    <property type="match status" value="1"/>
</dbReference>
<dbReference type="PANTHER" id="PTHR12815:SF23">
    <property type="entry name" value="OUTER MEMBRANE PROTEIN ASSEMBLY FACTOR BAMA"/>
    <property type="match status" value="1"/>
</dbReference>
<dbReference type="PANTHER" id="PTHR12815">
    <property type="entry name" value="SORTING AND ASSEMBLY MACHINERY SAMM50 PROTEIN FAMILY MEMBER"/>
    <property type="match status" value="1"/>
</dbReference>
<dbReference type="Pfam" id="PF01103">
    <property type="entry name" value="Omp85"/>
    <property type="match status" value="1"/>
</dbReference>
<dbReference type="Pfam" id="PF07244">
    <property type="entry name" value="POTRA"/>
    <property type="match status" value="4"/>
</dbReference>
<dbReference type="PIRSF" id="PIRSF006076">
    <property type="entry name" value="OM_assembly_OMP85"/>
    <property type="match status" value="1"/>
</dbReference>
<dbReference type="PROSITE" id="PS51779">
    <property type="entry name" value="POTRA"/>
    <property type="match status" value="5"/>
</dbReference>
<protein>
    <recommendedName>
        <fullName evidence="1">Outer membrane protein assembly factor BamA</fullName>
    </recommendedName>
</protein>
<sequence length="803" mass="89466">MAMKKLLIASLLFSSATVYGAEGFVVKDIHFEGLQRVAVGAALLSMPVRTGDTVNDEDISNTIRALFATGNFEDVRVLRDGNTLLVQVKERPTIASITFSGNKSVKDDMLKQNLEASGVRVGESLDRTTLSDIEKGLEDFYYSVGKYSASVKAVVTPLPRNRVDLKLVFQEGVSAKIQQINIVGNHAFSTEELISHFQLRDEVPWWNVVGDRKYQKQKLAGDLETLRSYYLDRGYARFNIDSTQVSLTPDKKGIYITVNITEGDQYKLSGVQVSGNLAGHSAEIEKLTKIEPGELYNGTKVTKMEDDIKKLLGRYGYAYPRVQSQPEINDADKTVKLRVNVDAGNRFYVRKIRFEGNDTSKDSVLRREMRQMEGAWLGSDLVDQGKERLNRLGFFETVDTDTQRVPGSPDQVDVVYKVKERNTGSFNFGIGYGTESGVSFQAGVQQDNWLGTGYSVGINGTKNDYQTYSELSVTNPYFTVDGVSLGGRIFYNDFEADDADLSDYTNKSYGTDVTLGFPINEYNTLRAGLGYVHNKLSNMQPQIAMDRYLESMGDPDASDFAADDFTFNYGWTYNKLDRGYFPTDGSRVNLTGKVTIPGSDNEYYKVSLDTATYVPIDNDHKWVVLGRTRWGYGDGLGGKEMPFYENFYAGGSSTVRGFQSNTIGPKAVYKNGAHTSWDDNDDYEDCTQESGCKSDDAVGGNAMAVASLEFITPTPFISEKYANSVRTSFFWDMGTVWDTNWDPSSAPSDVPDYSDPGNIRMSAGIALQWMSPLGPLVFSYAQPFKKYDGDKAEQFQFNIGKTW</sequence>
<comment type="function">
    <text evidence="1">Part of the outer membrane protein assembly complex, which is involved in assembly and insertion of beta-barrel proteins into the outer membrane. Constitutes, with BamD, the core component of the assembly machinery.</text>
</comment>
<comment type="subunit">
    <text evidence="1">Part of the Bam complex, which is composed of the outer membrane protein BamA, and four lipoproteins BamB, BamC, BamD and BamE.</text>
</comment>
<comment type="subcellular location">
    <subcellularLocation>
        <location evidence="1">Cell outer membrane</location>
    </subcellularLocation>
</comment>
<comment type="similarity">
    <text evidence="1">Belongs to the BamA family.</text>
</comment>
<feature type="signal peptide" evidence="1">
    <location>
        <begin position="1"/>
        <end position="20"/>
    </location>
</feature>
<feature type="chain" id="PRO_0000045375" description="Outer membrane protein assembly factor BamA">
    <location>
        <begin position="21"/>
        <end position="803"/>
    </location>
</feature>
<feature type="domain" description="POTRA 1" evidence="2">
    <location>
        <begin position="24"/>
        <end position="91"/>
    </location>
</feature>
<feature type="domain" description="POTRA 2" evidence="2">
    <location>
        <begin position="92"/>
        <end position="172"/>
    </location>
</feature>
<feature type="domain" description="POTRA 3" evidence="2">
    <location>
        <begin position="175"/>
        <end position="263"/>
    </location>
</feature>
<feature type="domain" description="POTRA 4" evidence="2">
    <location>
        <begin position="266"/>
        <end position="344"/>
    </location>
</feature>
<feature type="domain" description="POTRA 5" evidence="2">
    <location>
        <begin position="347"/>
        <end position="421"/>
    </location>
</feature>
<name>BAMA_SALPA</name>
<reference key="1">
    <citation type="journal article" date="2004" name="Nat. Genet.">
        <title>Comparison of genome degradation in Paratyphi A and Typhi, human-restricted serovars of Salmonella enterica that cause typhoid.</title>
        <authorList>
            <person name="McClelland M."/>
            <person name="Sanderson K.E."/>
            <person name="Clifton S.W."/>
            <person name="Latreille P."/>
            <person name="Porwollik S."/>
            <person name="Sabo A."/>
            <person name="Meyer R."/>
            <person name="Bieri T."/>
            <person name="Ozersky P."/>
            <person name="McLellan M."/>
            <person name="Harkins C.R."/>
            <person name="Wang C."/>
            <person name="Nguyen C."/>
            <person name="Berghoff A."/>
            <person name="Elliott G."/>
            <person name="Kohlberg S."/>
            <person name="Strong C."/>
            <person name="Du F."/>
            <person name="Carter J."/>
            <person name="Kremizki C."/>
            <person name="Layman D."/>
            <person name="Leonard S."/>
            <person name="Sun H."/>
            <person name="Fulton L."/>
            <person name="Nash W."/>
            <person name="Miner T."/>
            <person name="Minx P."/>
            <person name="Delehaunty K."/>
            <person name="Fronick C."/>
            <person name="Magrini V."/>
            <person name="Nhan M."/>
            <person name="Warren W."/>
            <person name="Florea L."/>
            <person name="Spieth J."/>
            <person name="Wilson R.K."/>
        </authorList>
    </citation>
    <scope>NUCLEOTIDE SEQUENCE [LARGE SCALE GENOMIC DNA]</scope>
    <source>
        <strain>ATCC 9150 / SARB42</strain>
    </source>
</reference>